<organism>
    <name type="scientific">Mus musculus</name>
    <name type="common">Mouse</name>
    <dbReference type="NCBI Taxonomy" id="10090"/>
    <lineage>
        <taxon>Eukaryota</taxon>
        <taxon>Metazoa</taxon>
        <taxon>Chordata</taxon>
        <taxon>Craniata</taxon>
        <taxon>Vertebrata</taxon>
        <taxon>Euteleostomi</taxon>
        <taxon>Mammalia</taxon>
        <taxon>Eutheria</taxon>
        <taxon>Euarchontoglires</taxon>
        <taxon>Glires</taxon>
        <taxon>Rodentia</taxon>
        <taxon>Myomorpha</taxon>
        <taxon>Muroidea</taxon>
        <taxon>Muridae</taxon>
        <taxon>Murinae</taxon>
        <taxon>Mus</taxon>
        <taxon>Mus</taxon>
    </lineage>
</organism>
<gene>
    <name evidence="12" type="primary">Kif3b</name>
</gene>
<reference key="1">
    <citation type="journal article" date="1995" name="J. Cell Biol.">
        <title>KIF3A/B: a heterodimeric kinesin superfamily protein that works as a microtubule plus end-directed motor for membrane organelle transport.</title>
        <authorList>
            <person name="Yamazaki H."/>
            <person name="Nakata T."/>
            <person name="Okada Y."/>
            <person name="Hirokawa N."/>
        </authorList>
    </citation>
    <scope>NUCLEOTIDE SEQUENCE [MRNA]</scope>
    <scope>SUBUNIT</scope>
    <scope>INTERACTION WITH KIF3A</scope>
    <scope>FUNCTION</scope>
    <source>
        <strain>ICR</strain>
        <tissue>Brain</tissue>
    </source>
</reference>
<reference key="2">
    <citation type="journal article" date="2005" name="Science">
        <title>The transcriptional landscape of the mammalian genome.</title>
        <authorList>
            <person name="Carninci P."/>
            <person name="Kasukawa T."/>
            <person name="Katayama S."/>
            <person name="Gough J."/>
            <person name="Frith M.C."/>
            <person name="Maeda N."/>
            <person name="Oyama R."/>
            <person name="Ravasi T."/>
            <person name="Lenhard B."/>
            <person name="Wells C."/>
            <person name="Kodzius R."/>
            <person name="Shimokawa K."/>
            <person name="Bajic V.B."/>
            <person name="Brenner S.E."/>
            <person name="Batalov S."/>
            <person name="Forrest A.R."/>
            <person name="Zavolan M."/>
            <person name="Davis M.J."/>
            <person name="Wilming L.G."/>
            <person name="Aidinis V."/>
            <person name="Allen J.E."/>
            <person name="Ambesi-Impiombato A."/>
            <person name="Apweiler R."/>
            <person name="Aturaliya R.N."/>
            <person name="Bailey T.L."/>
            <person name="Bansal M."/>
            <person name="Baxter L."/>
            <person name="Beisel K.W."/>
            <person name="Bersano T."/>
            <person name="Bono H."/>
            <person name="Chalk A.M."/>
            <person name="Chiu K.P."/>
            <person name="Choudhary V."/>
            <person name="Christoffels A."/>
            <person name="Clutterbuck D.R."/>
            <person name="Crowe M.L."/>
            <person name="Dalla E."/>
            <person name="Dalrymple B.P."/>
            <person name="de Bono B."/>
            <person name="Della Gatta G."/>
            <person name="di Bernardo D."/>
            <person name="Down T."/>
            <person name="Engstrom P."/>
            <person name="Fagiolini M."/>
            <person name="Faulkner G."/>
            <person name="Fletcher C.F."/>
            <person name="Fukushima T."/>
            <person name="Furuno M."/>
            <person name="Futaki S."/>
            <person name="Gariboldi M."/>
            <person name="Georgii-Hemming P."/>
            <person name="Gingeras T.R."/>
            <person name="Gojobori T."/>
            <person name="Green R.E."/>
            <person name="Gustincich S."/>
            <person name="Harbers M."/>
            <person name="Hayashi Y."/>
            <person name="Hensch T.K."/>
            <person name="Hirokawa N."/>
            <person name="Hill D."/>
            <person name="Huminiecki L."/>
            <person name="Iacono M."/>
            <person name="Ikeo K."/>
            <person name="Iwama A."/>
            <person name="Ishikawa T."/>
            <person name="Jakt M."/>
            <person name="Kanapin A."/>
            <person name="Katoh M."/>
            <person name="Kawasawa Y."/>
            <person name="Kelso J."/>
            <person name="Kitamura H."/>
            <person name="Kitano H."/>
            <person name="Kollias G."/>
            <person name="Krishnan S.P."/>
            <person name="Kruger A."/>
            <person name="Kummerfeld S.K."/>
            <person name="Kurochkin I.V."/>
            <person name="Lareau L.F."/>
            <person name="Lazarevic D."/>
            <person name="Lipovich L."/>
            <person name="Liu J."/>
            <person name="Liuni S."/>
            <person name="McWilliam S."/>
            <person name="Madan Babu M."/>
            <person name="Madera M."/>
            <person name="Marchionni L."/>
            <person name="Matsuda H."/>
            <person name="Matsuzawa S."/>
            <person name="Miki H."/>
            <person name="Mignone F."/>
            <person name="Miyake S."/>
            <person name="Morris K."/>
            <person name="Mottagui-Tabar S."/>
            <person name="Mulder N."/>
            <person name="Nakano N."/>
            <person name="Nakauchi H."/>
            <person name="Ng P."/>
            <person name="Nilsson R."/>
            <person name="Nishiguchi S."/>
            <person name="Nishikawa S."/>
            <person name="Nori F."/>
            <person name="Ohara O."/>
            <person name="Okazaki Y."/>
            <person name="Orlando V."/>
            <person name="Pang K.C."/>
            <person name="Pavan W.J."/>
            <person name="Pavesi G."/>
            <person name="Pesole G."/>
            <person name="Petrovsky N."/>
            <person name="Piazza S."/>
            <person name="Reed J."/>
            <person name="Reid J.F."/>
            <person name="Ring B.Z."/>
            <person name="Ringwald M."/>
            <person name="Rost B."/>
            <person name="Ruan Y."/>
            <person name="Salzberg S.L."/>
            <person name="Sandelin A."/>
            <person name="Schneider C."/>
            <person name="Schoenbach C."/>
            <person name="Sekiguchi K."/>
            <person name="Semple C.A."/>
            <person name="Seno S."/>
            <person name="Sessa L."/>
            <person name="Sheng Y."/>
            <person name="Shibata Y."/>
            <person name="Shimada H."/>
            <person name="Shimada K."/>
            <person name="Silva D."/>
            <person name="Sinclair B."/>
            <person name="Sperling S."/>
            <person name="Stupka E."/>
            <person name="Sugiura K."/>
            <person name="Sultana R."/>
            <person name="Takenaka Y."/>
            <person name="Taki K."/>
            <person name="Tammoja K."/>
            <person name="Tan S.L."/>
            <person name="Tang S."/>
            <person name="Taylor M.S."/>
            <person name="Tegner J."/>
            <person name="Teichmann S.A."/>
            <person name="Ueda H.R."/>
            <person name="van Nimwegen E."/>
            <person name="Verardo R."/>
            <person name="Wei C.L."/>
            <person name="Yagi K."/>
            <person name="Yamanishi H."/>
            <person name="Zabarovsky E."/>
            <person name="Zhu S."/>
            <person name="Zimmer A."/>
            <person name="Hide W."/>
            <person name="Bult C."/>
            <person name="Grimmond S.M."/>
            <person name="Teasdale R.D."/>
            <person name="Liu E.T."/>
            <person name="Brusic V."/>
            <person name="Quackenbush J."/>
            <person name="Wahlestedt C."/>
            <person name="Mattick J.S."/>
            <person name="Hume D.A."/>
            <person name="Kai C."/>
            <person name="Sasaki D."/>
            <person name="Tomaru Y."/>
            <person name="Fukuda S."/>
            <person name="Kanamori-Katayama M."/>
            <person name="Suzuki M."/>
            <person name="Aoki J."/>
            <person name="Arakawa T."/>
            <person name="Iida J."/>
            <person name="Imamura K."/>
            <person name="Itoh M."/>
            <person name="Kato T."/>
            <person name="Kawaji H."/>
            <person name="Kawagashira N."/>
            <person name="Kawashima T."/>
            <person name="Kojima M."/>
            <person name="Kondo S."/>
            <person name="Konno H."/>
            <person name="Nakano K."/>
            <person name="Ninomiya N."/>
            <person name="Nishio T."/>
            <person name="Okada M."/>
            <person name="Plessy C."/>
            <person name="Shibata K."/>
            <person name="Shiraki T."/>
            <person name="Suzuki S."/>
            <person name="Tagami M."/>
            <person name="Waki K."/>
            <person name="Watahiki A."/>
            <person name="Okamura-Oho Y."/>
            <person name="Suzuki H."/>
            <person name="Kawai J."/>
            <person name="Hayashizaki Y."/>
        </authorList>
    </citation>
    <scope>NUCLEOTIDE SEQUENCE [LARGE SCALE MRNA]</scope>
    <source>
        <strain>C57BL/6J</strain>
    </source>
</reference>
<reference key="3">
    <citation type="journal article" date="1998" name="Cell">
        <title>Randomization of left-right asymmetry due to loss of nodal cilia generating leftward flow of extraembryonic fluid in mice lacking KIF3B motor protein.</title>
        <authorList>
            <person name="Nonaka S."/>
            <person name="Tanaka Y."/>
            <person name="Okada Y."/>
            <person name="Takeda S."/>
            <person name="Harada A."/>
            <person name="Kanai Y."/>
            <person name="Kido M."/>
            <person name="Hirokawa N."/>
        </authorList>
    </citation>
    <scope>DISRUPTION PHENOTYPE</scope>
    <scope>SUBCELLULAR LOCATION</scope>
    <scope>FUNCTION</scope>
</reference>
<reference key="4">
    <citation type="journal article" date="1996" name="Proc. Natl. Acad. Sci. U.S.A.">
        <title>Cloning and characterization of KAP3: a novel kinesin superfamily-associated protein of KIF3A/3B.</title>
        <authorList>
            <person name="Yamazaki H."/>
            <person name="Nakata T."/>
            <person name="Okada Y."/>
            <person name="Hirokawa N."/>
        </authorList>
    </citation>
    <scope>SUBUNIT</scope>
    <scope>IDENTIFICATION IN A COMPLEX WITH KIB3A AND KIFAP3</scope>
</reference>
<reference key="5">
    <citation type="journal article" date="2003" name="J. Biol. Chem.">
        <title>IFT20 links kinesin II with a mammalian intraflagellar transport complex that is conserved in motile flagella and sensory cilia.</title>
        <authorList>
            <person name="Baker S.A."/>
            <person name="Freeman K."/>
            <person name="Luby-Phelps K."/>
            <person name="Pazour G.J."/>
            <person name="Besharse J.C."/>
        </authorList>
    </citation>
    <scope>INTERACTION WITH IFT20</scope>
</reference>
<reference key="6">
    <citation type="journal article" date="2010" name="Cell">
        <title>A tissue-specific atlas of mouse protein phosphorylation and expression.</title>
        <authorList>
            <person name="Huttlin E.L."/>
            <person name="Jedrychowski M.P."/>
            <person name="Elias J.E."/>
            <person name="Goswami T."/>
            <person name="Rad R."/>
            <person name="Beausoleil S.A."/>
            <person name="Villen J."/>
            <person name="Haas W."/>
            <person name="Sowa M.E."/>
            <person name="Gygi S.P."/>
        </authorList>
    </citation>
    <scope>IDENTIFICATION BY MASS SPECTROMETRY [LARGE SCALE ANALYSIS]</scope>
    <source>
        <tissue>Brain</tissue>
        <tissue>Kidney</tissue>
        <tissue>Lung</tissue>
        <tissue>Pancreas</tissue>
        <tissue>Testis</tissue>
    </source>
</reference>
<reference key="7">
    <citation type="journal article" date="2014" name="PLoS ONE">
        <title>Regulation of cilium length and intraflagellar transport by the RCK-kinases ICK and MOK in renal epithelial cells.</title>
        <authorList>
            <person name="Broekhuis J.R."/>
            <person name="Verhey K.J."/>
            <person name="Jansen G."/>
        </authorList>
    </citation>
    <scope>SUBCELLULAR LOCATION</scope>
</reference>
<reference key="8">
    <citation type="journal article" date="2020" name="EMBO J.">
        <title>Kinesin Kif3b mutation reduces NMDAR subunit NR2A trafficking and causes schizophrenia-like phenotypes in mice.</title>
        <authorList>
            <person name="Alsabban A.H."/>
            <person name="Morikawa M."/>
            <person name="Tanaka Y."/>
            <person name="Takei Y."/>
            <person name="Hirokawa N."/>
        </authorList>
    </citation>
    <scope>FUNCTION</scope>
    <scope>DISRUPTION PHENOTYPE</scope>
    <scope>SUBCELLULAR LOCATION</scope>
</reference>
<accession>Q61771</accession>
<accession>Q3UFZ8</accession>
<accession>Q8BNH4</accession>
<sequence>MSKLKSSESVRVVVRCRPMNGKEKAASYDKVVDVDVKLGQVSVKNPKGTSHEMPKTFTFDAVYDWNAKQFELYDETFRPLVDSVLQGFNGTIFAYGQTGTGKTYTMEGVRGDPEKRGVIPNSFDHIFTHISRSQNQQYLVRASYLEIYQEEIRDLLSKDQTKRLELKERPDTGVYVKDLSSFVTKSVKEIEHVMNVGNQNRSVGATNMNEHSSRSHAIFVITIECSEVGLDGENHIRVGKLNLVDLAGSERQAKTGAQGERLKEATKINLSLSALGNVISALVDGKSTHIPYRDSKLTRLLQDSLGGNAKTVMVANVGPASYNVEETLTTLRYANRAKNIKNKPRVNEDPKDALLREFQEEIARLKAQLEKRSIGRRKRREKRREGGGSGGGGEEEEEEGEEGEEDGDDKDDYWREQQEKLEIEKRAIVEDHSLVAEEKMRLLKEKEKKMEDLRREKDAAEMLGAKIKAMESKLLVGGKNIVDHTNEQQKILEQKRQEIAEQKRREREIQQQMESRDEETLELKETYTSLQQEVDIKTKKLKKLFSKLQAVKAEIHDLQEEHIKERQELEQTQNELTRELKLKHLIIENFIPLEEKNKIMNRSFFDDEEDHWKLHPITRLENQQMMKRPVSAVGYKRPLSQHARMSMMIRPEPRYRAENIMLLELDMPSRTTRDYEGPAISPKVQAALDAALQDEDEIQVDASSFESTASRKPKARPKSGRKSGSSSSSSGNPASQFYPQSRGLVPK</sequence>
<comment type="function">
    <text evidence="1 7 8 10">Microtubule-based molecular motor that transport intracellular cargos, such as vesicles, organelles and protein complexes. Uses ATP hydrolysis to generate force to bind and move along the microtubule (PubMed:7559760). Plays a role in cilia formation (PubMed:9865700). Involved in photoreceptor integrity and opsin trafficking in rod photoreceptors (By similarity). Transports vesicles containing N-methyl-D-aspartate (NMDA) receptor subunit GRIN2A into neuronal dendrites (PubMed:31746486).</text>
</comment>
<comment type="subunit">
    <text evidence="1 5 8 9">Heterodimer of KIF3A and KIF3B (PubMed:7559760). KIF3A/KIF3B heterodimer interacts with KIFAP3 forming a heterotrimeric (KIF3A/KIF3B/KIFAP3) complex (PubMed:8710890). Interacts with the SMC3 subunit of the cohesin complex (By similarity). Interacts directly with IFT20 (PubMed:12821668). Interacts with FLCN (By similarity).</text>
</comment>
<comment type="interaction">
    <interactant intactId="EBI-6395332">
        <id>Q61771</id>
    </interactant>
    <interactant intactId="EBI-6169413">
        <id>P28741</id>
        <label>Kif3a</label>
    </interactant>
    <organismsDiffer>false</organismsDiffer>
    <experiments>6</experiments>
</comment>
<comment type="interaction">
    <interactant intactId="EBI-6395332">
        <id>Q61771</id>
    </interactant>
    <interactant intactId="EBI-6395249">
        <id>Q8VI40</id>
        <label>Trim60</label>
    </interactant>
    <organismsDiffer>false</organismsDiffer>
    <experiments>3</experiments>
</comment>
<comment type="subcellular location">
    <subcellularLocation>
        <location evidence="11">Cytoplasm</location>
        <location evidence="11">Cytoskeleton</location>
    </subcellularLocation>
    <subcellularLocation>
        <location evidence="6 10">Cell projection</location>
        <location evidence="6 10">Cilium</location>
    </subcellularLocation>
    <subcellularLocation>
        <location evidence="7">Cell projection</location>
        <location evidence="7">Dendritic spine</location>
    </subcellularLocation>
    <text evidence="7">Colocalized with GRIN2A in dendritic shafts and in DLG4-positive spines.</text>
</comment>
<comment type="disruption phenotype">
    <text evidence="7 10">Deficient mice do not survive beyond midgestation, exhibiting growth retardation, pericardial sac ballooning, and neural tube disorganization (PubMed:9865700). Kif3b +/- mice exhibit schizophrenia-like phenotypes, both behaviorally and histologically. Hippocampal neurons have altered spine morphology and synapse function, and at the cellular level, they display abnormal growth cone morphology (PubMed:31746486).</text>
</comment>
<comment type="similarity">
    <text evidence="3">Belongs to the TRAFAC class myosin-kinesin ATPase superfamily. Kinesin family. Kinesin II subfamily.</text>
</comment>
<proteinExistence type="evidence at protein level"/>
<name>KIF3B_MOUSE</name>
<dbReference type="EMBL" id="D26077">
    <property type="protein sequence ID" value="BAA05070.1"/>
    <property type="molecule type" value="mRNA"/>
</dbReference>
<dbReference type="EMBL" id="AK148200">
    <property type="protein sequence ID" value="BAE28411.1"/>
    <property type="molecule type" value="mRNA"/>
</dbReference>
<dbReference type="EMBL" id="AK083700">
    <property type="protein sequence ID" value="BAC38996.1"/>
    <property type="molecule type" value="mRNA"/>
</dbReference>
<dbReference type="CCDS" id="CCDS16911.1"/>
<dbReference type="PIR" id="A57107">
    <property type="entry name" value="A57107"/>
</dbReference>
<dbReference type="RefSeq" id="NP_032470.3">
    <property type="nucleotide sequence ID" value="NM_008444.4"/>
</dbReference>
<dbReference type="SASBDB" id="Q61771"/>
<dbReference type="SMR" id="Q61771"/>
<dbReference type="BioGRID" id="200942">
    <property type="interactions" value="14"/>
</dbReference>
<dbReference type="ComplexPortal" id="CPX-3203">
    <property type="entry name" value="KIF3 complex variant AB"/>
</dbReference>
<dbReference type="ComplexPortal" id="CPX-3204">
    <property type="entry name" value="KIF3 complex variant AB-KAP3"/>
</dbReference>
<dbReference type="CORUM" id="Q61771"/>
<dbReference type="FunCoup" id="Q61771">
    <property type="interactions" value="1938"/>
</dbReference>
<dbReference type="IntAct" id="Q61771">
    <property type="interactions" value="8"/>
</dbReference>
<dbReference type="MINT" id="Q61771"/>
<dbReference type="STRING" id="10090.ENSMUSP00000028977"/>
<dbReference type="GlyGen" id="Q61771">
    <property type="glycosylation" value="2 sites, 1 N-linked glycan (1 site), 1 O-linked glycan (1 site)"/>
</dbReference>
<dbReference type="iPTMnet" id="Q61771"/>
<dbReference type="PhosphoSitePlus" id="Q61771"/>
<dbReference type="PaxDb" id="10090-ENSMUSP00000028977"/>
<dbReference type="ProteomicsDB" id="269219"/>
<dbReference type="Pumba" id="Q61771"/>
<dbReference type="Antibodypedia" id="1560">
    <property type="antibodies" value="114 antibodies from 23 providers"/>
</dbReference>
<dbReference type="DNASU" id="16569"/>
<dbReference type="Ensembl" id="ENSMUST00000028977.7">
    <property type="protein sequence ID" value="ENSMUSP00000028977.7"/>
    <property type="gene ID" value="ENSMUSG00000027475.10"/>
</dbReference>
<dbReference type="GeneID" id="16569"/>
<dbReference type="KEGG" id="mmu:16569"/>
<dbReference type="UCSC" id="uc008nhp.2">
    <property type="organism name" value="mouse"/>
</dbReference>
<dbReference type="AGR" id="MGI:107688"/>
<dbReference type="CTD" id="9371"/>
<dbReference type="MGI" id="MGI:107688">
    <property type="gene designation" value="Kif3b"/>
</dbReference>
<dbReference type="VEuPathDB" id="HostDB:ENSMUSG00000027475"/>
<dbReference type="eggNOG" id="KOG4280">
    <property type="taxonomic scope" value="Eukaryota"/>
</dbReference>
<dbReference type="GeneTree" id="ENSGT00940000153739"/>
<dbReference type="HOGENOM" id="CLU_001485_22_4_1"/>
<dbReference type="InParanoid" id="Q61771"/>
<dbReference type="OMA" id="LESKMLC"/>
<dbReference type="OrthoDB" id="3176171at2759"/>
<dbReference type="PhylomeDB" id="Q61771"/>
<dbReference type="TreeFam" id="TF105223"/>
<dbReference type="Reactome" id="R-MMU-2132295">
    <property type="pathway name" value="MHC class II antigen presentation"/>
</dbReference>
<dbReference type="Reactome" id="R-MMU-5620924">
    <property type="pathway name" value="Intraflagellar transport"/>
</dbReference>
<dbReference type="Reactome" id="R-MMU-6811434">
    <property type="pathway name" value="COPI-dependent Golgi-to-ER retrograde traffic"/>
</dbReference>
<dbReference type="Reactome" id="R-MMU-983189">
    <property type="pathway name" value="Kinesins"/>
</dbReference>
<dbReference type="BioGRID-ORCS" id="16569">
    <property type="hits" value="6 hits in 77 CRISPR screens"/>
</dbReference>
<dbReference type="ChiTaRS" id="Kif3b">
    <property type="organism name" value="mouse"/>
</dbReference>
<dbReference type="PRO" id="PR:Q61771"/>
<dbReference type="Proteomes" id="UP000000589">
    <property type="component" value="Chromosome 2"/>
</dbReference>
<dbReference type="RNAct" id="Q61771">
    <property type="molecule type" value="protein"/>
</dbReference>
<dbReference type="Bgee" id="ENSMUSG00000027475">
    <property type="expression patterns" value="Expressed in spermatocyte and 241 other cell types or tissues"/>
</dbReference>
<dbReference type="ExpressionAtlas" id="Q61771">
    <property type="expression patterns" value="baseline and differential"/>
</dbReference>
<dbReference type="GO" id="GO:0030424">
    <property type="term" value="C:axon"/>
    <property type="evidence" value="ECO:0007669"/>
    <property type="project" value="Ensembl"/>
</dbReference>
<dbReference type="GO" id="GO:0005813">
    <property type="term" value="C:centrosome"/>
    <property type="evidence" value="ECO:0000314"/>
    <property type="project" value="MGI"/>
</dbReference>
<dbReference type="GO" id="GO:0005929">
    <property type="term" value="C:cilium"/>
    <property type="evidence" value="ECO:0000314"/>
    <property type="project" value="UniProtKB"/>
</dbReference>
<dbReference type="GO" id="GO:0005829">
    <property type="term" value="C:cytosol"/>
    <property type="evidence" value="ECO:0000304"/>
    <property type="project" value="Reactome"/>
</dbReference>
<dbReference type="GO" id="GO:0030425">
    <property type="term" value="C:dendrite"/>
    <property type="evidence" value="ECO:0000314"/>
    <property type="project" value="UniProtKB"/>
</dbReference>
<dbReference type="GO" id="GO:0032839">
    <property type="term" value="C:dendrite cytoplasm"/>
    <property type="evidence" value="ECO:0007669"/>
    <property type="project" value="GOC"/>
</dbReference>
<dbReference type="GO" id="GO:0043197">
    <property type="term" value="C:dendritic spine"/>
    <property type="evidence" value="ECO:0007669"/>
    <property type="project" value="UniProtKB-SubCell"/>
</dbReference>
<dbReference type="GO" id="GO:0098978">
    <property type="term" value="C:glutamatergic synapse"/>
    <property type="evidence" value="ECO:0000314"/>
    <property type="project" value="SynGO"/>
</dbReference>
<dbReference type="GO" id="GO:0016939">
    <property type="term" value="C:kinesin II complex"/>
    <property type="evidence" value="ECO:0000314"/>
    <property type="project" value="MGI"/>
</dbReference>
<dbReference type="GO" id="GO:0005874">
    <property type="term" value="C:microtubule"/>
    <property type="evidence" value="ECO:0007669"/>
    <property type="project" value="UniProtKB-KW"/>
</dbReference>
<dbReference type="GO" id="GO:0030496">
    <property type="term" value="C:midbody"/>
    <property type="evidence" value="ECO:0007669"/>
    <property type="project" value="Ensembl"/>
</dbReference>
<dbReference type="GO" id="GO:0098794">
    <property type="term" value="C:postsynapse"/>
    <property type="evidence" value="ECO:0000314"/>
    <property type="project" value="SynGO"/>
</dbReference>
<dbReference type="GO" id="GO:0005524">
    <property type="term" value="F:ATP binding"/>
    <property type="evidence" value="ECO:0007669"/>
    <property type="project" value="UniProtKB-KW"/>
</dbReference>
<dbReference type="GO" id="GO:0120170">
    <property type="term" value="F:intraciliary transport particle B binding"/>
    <property type="evidence" value="ECO:0000314"/>
    <property type="project" value="MGI"/>
</dbReference>
<dbReference type="GO" id="GO:0008017">
    <property type="term" value="F:microtubule binding"/>
    <property type="evidence" value="ECO:0007669"/>
    <property type="project" value="Ensembl"/>
</dbReference>
<dbReference type="GO" id="GO:0003777">
    <property type="term" value="F:microtubule motor activity"/>
    <property type="evidence" value="ECO:0007669"/>
    <property type="project" value="InterPro"/>
</dbReference>
<dbReference type="GO" id="GO:0031267">
    <property type="term" value="F:small GTPase binding"/>
    <property type="evidence" value="ECO:0007669"/>
    <property type="project" value="Ensembl"/>
</dbReference>
<dbReference type="GO" id="GO:0098971">
    <property type="term" value="P:anterograde dendritic transport of neurotransmitter receptor complex"/>
    <property type="evidence" value="ECO:0000314"/>
    <property type="project" value="SynGO"/>
</dbReference>
<dbReference type="GO" id="GO:0060271">
    <property type="term" value="P:cilium assembly"/>
    <property type="evidence" value="ECO:0000315"/>
    <property type="project" value="UniProtKB"/>
</dbReference>
<dbReference type="GO" id="GO:0042073">
    <property type="term" value="P:intraciliary transport"/>
    <property type="evidence" value="ECO:0000250"/>
    <property type="project" value="UniProtKB"/>
</dbReference>
<dbReference type="GO" id="GO:0090307">
    <property type="term" value="P:mitotic spindle assembly"/>
    <property type="evidence" value="ECO:0007669"/>
    <property type="project" value="Ensembl"/>
</dbReference>
<dbReference type="GO" id="GO:0036372">
    <property type="term" value="P:opsin transport"/>
    <property type="evidence" value="ECO:0000250"/>
    <property type="project" value="UniProtKB"/>
</dbReference>
<dbReference type="GO" id="GO:0032467">
    <property type="term" value="P:positive regulation of cytokinesis"/>
    <property type="evidence" value="ECO:0007669"/>
    <property type="project" value="Ensembl"/>
</dbReference>
<dbReference type="GO" id="GO:0016192">
    <property type="term" value="P:vesicle-mediated transport"/>
    <property type="evidence" value="ECO:0000315"/>
    <property type="project" value="UniProtKB"/>
</dbReference>
<dbReference type="CDD" id="cd01371">
    <property type="entry name" value="KISc_KIF3"/>
    <property type="match status" value="1"/>
</dbReference>
<dbReference type="FunFam" id="3.40.850.10:FF:000017">
    <property type="entry name" value="Kinesin-like protein"/>
    <property type="match status" value="1"/>
</dbReference>
<dbReference type="Gene3D" id="3.40.850.10">
    <property type="entry name" value="Kinesin motor domain"/>
    <property type="match status" value="1"/>
</dbReference>
<dbReference type="InterPro" id="IPR027640">
    <property type="entry name" value="Kinesin-like_fam"/>
</dbReference>
<dbReference type="InterPro" id="IPR019821">
    <property type="entry name" value="Kinesin_motor_CS"/>
</dbReference>
<dbReference type="InterPro" id="IPR001752">
    <property type="entry name" value="Kinesin_motor_dom"/>
</dbReference>
<dbReference type="InterPro" id="IPR036961">
    <property type="entry name" value="Kinesin_motor_dom_sf"/>
</dbReference>
<dbReference type="InterPro" id="IPR027417">
    <property type="entry name" value="P-loop_NTPase"/>
</dbReference>
<dbReference type="PANTHER" id="PTHR47968">
    <property type="entry name" value="CENTROMERE PROTEIN E"/>
    <property type="match status" value="1"/>
</dbReference>
<dbReference type="PANTHER" id="PTHR47968:SF76">
    <property type="entry name" value="KINESIN-LIKE PROTEIN"/>
    <property type="match status" value="1"/>
</dbReference>
<dbReference type="Pfam" id="PF00225">
    <property type="entry name" value="Kinesin"/>
    <property type="match status" value="1"/>
</dbReference>
<dbReference type="PRINTS" id="PR00380">
    <property type="entry name" value="KINESINHEAVY"/>
</dbReference>
<dbReference type="SMART" id="SM00129">
    <property type="entry name" value="KISc"/>
    <property type="match status" value="1"/>
</dbReference>
<dbReference type="SUPFAM" id="SSF52540">
    <property type="entry name" value="P-loop containing nucleoside triphosphate hydrolases"/>
    <property type="match status" value="1"/>
</dbReference>
<dbReference type="PROSITE" id="PS00411">
    <property type="entry name" value="KINESIN_MOTOR_1"/>
    <property type="match status" value="1"/>
</dbReference>
<dbReference type="PROSITE" id="PS50067">
    <property type="entry name" value="KINESIN_MOTOR_2"/>
    <property type="match status" value="1"/>
</dbReference>
<protein>
    <recommendedName>
        <fullName>Kinesin-like protein KIF3B</fullName>
    </recommendedName>
    <alternativeName>
        <fullName>Microtubule plus end-directed kinesin motor 3B</fullName>
    </alternativeName>
    <component>
        <recommendedName>
            <fullName>Kinesin-like protein KIF3B, N-terminally processed</fullName>
        </recommendedName>
    </component>
</protein>
<evidence type="ECO:0000250" key="1">
    <source>
        <dbReference type="UniProtKB" id="O15066"/>
    </source>
</evidence>
<evidence type="ECO:0000255" key="2"/>
<evidence type="ECO:0000255" key="3">
    <source>
        <dbReference type="PROSITE-ProRule" id="PRU00283"/>
    </source>
</evidence>
<evidence type="ECO:0000256" key="4">
    <source>
        <dbReference type="SAM" id="MobiDB-lite"/>
    </source>
</evidence>
<evidence type="ECO:0000269" key="5">
    <source>
    </source>
</evidence>
<evidence type="ECO:0000269" key="6">
    <source>
    </source>
</evidence>
<evidence type="ECO:0000269" key="7">
    <source>
    </source>
</evidence>
<evidence type="ECO:0000269" key="8">
    <source>
    </source>
</evidence>
<evidence type="ECO:0000269" key="9">
    <source>
    </source>
</evidence>
<evidence type="ECO:0000269" key="10">
    <source>
    </source>
</evidence>
<evidence type="ECO:0000305" key="11"/>
<evidence type="ECO:0000312" key="12">
    <source>
        <dbReference type="MGI" id="MGI:107688"/>
    </source>
</evidence>
<keyword id="KW-0007">Acetylation</keyword>
<keyword id="KW-0067">ATP-binding</keyword>
<keyword id="KW-0966">Cell projection</keyword>
<keyword id="KW-0175">Coiled coil</keyword>
<keyword id="KW-0963">Cytoplasm</keyword>
<keyword id="KW-0206">Cytoskeleton</keyword>
<keyword id="KW-0493">Microtubule</keyword>
<keyword id="KW-0505">Motor protein</keyword>
<keyword id="KW-0547">Nucleotide-binding</keyword>
<keyword id="KW-1185">Reference proteome</keyword>
<keyword id="KW-0770">Synapse</keyword>
<feature type="chain" id="PRO_0000424496" description="Kinesin-like protein KIF3B">
    <location>
        <begin position="1"/>
        <end position="747"/>
    </location>
</feature>
<feature type="initiator methionine" description="Removed; alternate" evidence="1">
    <location>
        <position position="1"/>
    </location>
</feature>
<feature type="chain" id="PRO_0000125396" description="Kinesin-like protein KIF3B, N-terminally processed">
    <location>
        <begin position="2"/>
        <end position="747"/>
    </location>
</feature>
<feature type="domain" description="Kinesin motor" evidence="3">
    <location>
        <begin position="9"/>
        <end position="340"/>
    </location>
</feature>
<feature type="region of interest" description="Disordered" evidence="4">
    <location>
        <begin position="374"/>
        <end position="412"/>
    </location>
</feature>
<feature type="region of interest" description="Globular">
    <location>
        <begin position="580"/>
        <end position="747"/>
    </location>
</feature>
<feature type="region of interest" description="Disordered" evidence="4">
    <location>
        <begin position="698"/>
        <end position="747"/>
    </location>
</feature>
<feature type="coiled-coil region" evidence="2">
    <location>
        <begin position="346"/>
        <end position="579"/>
    </location>
</feature>
<feature type="compositionally biased region" description="Acidic residues" evidence="4">
    <location>
        <begin position="393"/>
        <end position="411"/>
    </location>
</feature>
<feature type="compositionally biased region" description="Polar residues" evidence="4">
    <location>
        <begin position="701"/>
        <end position="710"/>
    </location>
</feature>
<feature type="compositionally biased region" description="Basic residues" evidence="4">
    <location>
        <begin position="711"/>
        <end position="721"/>
    </location>
</feature>
<feature type="compositionally biased region" description="Low complexity" evidence="4">
    <location>
        <begin position="722"/>
        <end position="735"/>
    </location>
</feature>
<feature type="binding site" evidence="3">
    <location>
        <begin position="96"/>
        <end position="103"/>
    </location>
    <ligand>
        <name>ATP</name>
        <dbReference type="ChEBI" id="CHEBI:30616"/>
    </ligand>
</feature>
<feature type="modified residue" description="N-acetylmethionine" evidence="1">
    <location>
        <position position="1"/>
    </location>
</feature>
<feature type="modified residue" description="N-acetylserine; in Kinesin-like protein KIF3B, N-terminally processed" evidence="1">
    <location>
        <position position="2"/>
    </location>
</feature>
<feature type="sequence conflict" description="In Ref. 2; BAE28411." evidence="11" ref="2">
    <original>V</original>
    <variation>M</variation>
    <location>
        <position position="13"/>
    </location>
</feature>
<feature type="sequence conflict" description="In Ref. 2; BAC38996." evidence="11" ref="2">
    <original>V</original>
    <variation>A</variation>
    <location>
        <position position="34"/>
    </location>
</feature>
<feature type="sequence conflict" description="In Ref. 2; BAE28411." evidence="11" ref="2">
    <original>S</original>
    <variation>N</variation>
    <location>
        <position position="710"/>
    </location>
</feature>